<protein>
    <recommendedName>
        <fullName evidence="1">Na(+)-translocating NADH-quinone reductase subunit E</fullName>
        <shortName evidence="1">Na(+)-NQR subunit E</shortName>
        <shortName evidence="1">Na(+)-translocating NQR subunit E</shortName>
        <ecNumber evidence="1">7.2.1.1</ecNumber>
    </recommendedName>
    <alternativeName>
        <fullName evidence="1">NQR complex subunit E</fullName>
    </alternativeName>
    <alternativeName>
        <fullName evidence="1">NQR-1 subunit E</fullName>
    </alternativeName>
</protein>
<sequence>MEHYISLLVRAVFVENMALAFFLGMCTFLAVSKKVSTAFGLGIAVTVVLGISVPANNLVYNLVLRDGALVEGVDLSFLNFITFIGVIAAIVQVLEMILDRYFPALYNALGIFLPLITVNCAIFGGVSFMAQRDYNFPESIVYGFGSGMGWMLAIVALAGIREKMKYANVPAGLQGLGITFISTGLMALGFMSFAGVNL</sequence>
<accession>Q1CLD9</accession>
<accession>C4GQC8</accession>
<organism>
    <name type="scientific">Yersinia pestis bv. Antiqua (strain Nepal516)</name>
    <dbReference type="NCBI Taxonomy" id="377628"/>
    <lineage>
        <taxon>Bacteria</taxon>
        <taxon>Pseudomonadati</taxon>
        <taxon>Pseudomonadota</taxon>
        <taxon>Gammaproteobacteria</taxon>
        <taxon>Enterobacterales</taxon>
        <taxon>Yersiniaceae</taxon>
        <taxon>Yersinia</taxon>
    </lineage>
</organism>
<keyword id="KW-0997">Cell inner membrane</keyword>
<keyword id="KW-1003">Cell membrane</keyword>
<keyword id="KW-0406">Ion transport</keyword>
<keyword id="KW-0472">Membrane</keyword>
<keyword id="KW-0520">NAD</keyword>
<keyword id="KW-0915">Sodium</keyword>
<keyword id="KW-0739">Sodium transport</keyword>
<keyword id="KW-1278">Translocase</keyword>
<keyword id="KW-0812">Transmembrane</keyword>
<keyword id="KW-1133">Transmembrane helix</keyword>
<keyword id="KW-0813">Transport</keyword>
<keyword id="KW-0830">Ubiquinone</keyword>
<comment type="function">
    <text evidence="1">NQR complex catalyzes the reduction of ubiquinone-1 to ubiquinol by two successive reactions, coupled with the transport of Na(+) ions from the cytoplasm to the periplasm. NqrA to NqrE are probably involved in the second step, the conversion of ubisemiquinone to ubiquinol.</text>
</comment>
<comment type="catalytic activity">
    <reaction evidence="1">
        <text>a ubiquinone + n Na(+)(in) + NADH + H(+) = a ubiquinol + n Na(+)(out) + NAD(+)</text>
        <dbReference type="Rhea" id="RHEA:47748"/>
        <dbReference type="Rhea" id="RHEA-COMP:9565"/>
        <dbReference type="Rhea" id="RHEA-COMP:9566"/>
        <dbReference type="ChEBI" id="CHEBI:15378"/>
        <dbReference type="ChEBI" id="CHEBI:16389"/>
        <dbReference type="ChEBI" id="CHEBI:17976"/>
        <dbReference type="ChEBI" id="CHEBI:29101"/>
        <dbReference type="ChEBI" id="CHEBI:57540"/>
        <dbReference type="ChEBI" id="CHEBI:57945"/>
        <dbReference type="EC" id="7.2.1.1"/>
    </reaction>
</comment>
<comment type="subunit">
    <text evidence="1">Composed of six subunits; NqrA, NqrB, NqrC, NqrD, NqrE and NqrF.</text>
</comment>
<comment type="subcellular location">
    <subcellularLocation>
        <location evidence="1">Cell inner membrane</location>
        <topology evidence="1">Multi-pass membrane protein</topology>
    </subcellularLocation>
</comment>
<comment type="similarity">
    <text evidence="1">Belongs to the NqrDE/RnfAE family.</text>
</comment>
<dbReference type="EC" id="7.2.1.1" evidence="1"/>
<dbReference type="EMBL" id="CP000305">
    <property type="protein sequence ID" value="ABG17191.1"/>
    <property type="molecule type" value="Genomic_DNA"/>
</dbReference>
<dbReference type="EMBL" id="ACNQ01000008">
    <property type="protein sequence ID" value="EEO77269.1"/>
    <property type="molecule type" value="Genomic_DNA"/>
</dbReference>
<dbReference type="PIR" id="AC0393">
    <property type="entry name" value="AC0393"/>
</dbReference>
<dbReference type="RefSeq" id="WP_002208713.1">
    <property type="nucleotide sequence ID" value="NZ_ACNQ01000008.1"/>
</dbReference>
<dbReference type="SMR" id="Q1CLD9"/>
<dbReference type="GeneID" id="57975483"/>
<dbReference type="KEGG" id="ypn:YPN_0859"/>
<dbReference type="HOGENOM" id="CLU_095255_0_0_6"/>
<dbReference type="Proteomes" id="UP000008936">
    <property type="component" value="Chromosome"/>
</dbReference>
<dbReference type="GO" id="GO:0009276">
    <property type="term" value="C:Gram-negative-bacterium-type cell wall"/>
    <property type="evidence" value="ECO:0007669"/>
    <property type="project" value="InterPro"/>
</dbReference>
<dbReference type="GO" id="GO:0005886">
    <property type="term" value="C:plasma membrane"/>
    <property type="evidence" value="ECO:0007669"/>
    <property type="project" value="UniProtKB-SubCell"/>
</dbReference>
<dbReference type="GO" id="GO:0016655">
    <property type="term" value="F:oxidoreductase activity, acting on NAD(P)H, quinone or similar compound as acceptor"/>
    <property type="evidence" value="ECO:0007669"/>
    <property type="project" value="UniProtKB-UniRule"/>
</dbReference>
<dbReference type="GO" id="GO:0022904">
    <property type="term" value="P:respiratory electron transport chain"/>
    <property type="evidence" value="ECO:0007669"/>
    <property type="project" value="InterPro"/>
</dbReference>
<dbReference type="GO" id="GO:0006814">
    <property type="term" value="P:sodium ion transport"/>
    <property type="evidence" value="ECO:0007669"/>
    <property type="project" value="UniProtKB-UniRule"/>
</dbReference>
<dbReference type="HAMAP" id="MF_00429">
    <property type="entry name" value="NqrE"/>
    <property type="match status" value="1"/>
</dbReference>
<dbReference type="InterPro" id="IPR003667">
    <property type="entry name" value="NqrDE/RnfAE"/>
</dbReference>
<dbReference type="InterPro" id="IPR050133">
    <property type="entry name" value="NqrDE/RnfAE_oxidrdctase"/>
</dbReference>
<dbReference type="InterPro" id="IPR010967">
    <property type="entry name" value="NqrE"/>
</dbReference>
<dbReference type="NCBIfam" id="TIGR01940">
    <property type="entry name" value="nqrE"/>
    <property type="match status" value="1"/>
</dbReference>
<dbReference type="PANTHER" id="PTHR30335">
    <property type="entry name" value="INTEGRAL MEMBRANE PROTEIN OF SOXR-REDUCING COMPLEX"/>
    <property type="match status" value="1"/>
</dbReference>
<dbReference type="PANTHER" id="PTHR30335:SF1">
    <property type="entry name" value="NA(+)-TRANSLOCATING NADH-QUINONE REDUCTASE SUBUNIT E"/>
    <property type="match status" value="1"/>
</dbReference>
<dbReference type="Pfam" id="PF02508">
    <property type="entry name" value="Rnf-Nqr"/>
    <property type="match status" value="1"/>
</dbReference>
<dbReference type="PIRSF" id="PIRSF006102">
    <property type="entry name" value="NQR_DE"/>
    <property type="match status" value="1"/>
</dbReference>
<feature type="chain" id="PRO_1000060219" description="Na(+)-translocating NADH-quinone reductase subunit E">
    <location>
        <begin position="1"/>
        <end position="198"/>
    </location>
</feature>
<feature type="transmembrane region" description="Helical" evidence="1">
    <location>
        <begin position="11"/>
        <end position="31"/>
    </location>
</feature>
<feature type="transmembrane region" description="Helical" evidence="1">
    <location>
        <begin position="35"/>
        <end position="55"/>
    </location>
</feature>
<feature type="transmembrane region" description="Helical" evidence="1">
    <location>
        <begin position="77"/>
        <end position="97"/>
    </location>
</feature>
<feature type="transmembrane region" description="Helical" evidence="1">
    <location>
        <begin position="109"/>
        <end position="129"/>
    </location>
</feature>
<feature type="transmembrane region" description="Helical" evidence="1">
    <location>
        <begin position="140"/>
        <end position="160"/>
    </location>
</feature>
<feature type="transmembrane region" description="Helical" evidence="1">
    <location>
        <begin position="176"/>
        <end position="196"/>
    </location>
</feature>
<reference key="1">
    <citation type="journal article" date="2006" name="J. Bacteriol.">
        <title>Complete genome sequence of Yersinia pestis strains Antiqua and Nepal516: evidence of gene reduction in an emerging pathogen.</title>
        <authorList>
            <person name="Chain P.S.G."/>
            <person name="Hu P."/>
            <person name="Malfatti S.A."/>
            <person name="Radnedge L."/>
            <person name="Larimer F."/>
            <person name="Vergez L.M."/>
            <person name="Worsham P."/>
            <person name="Chu M.C."/>
            <person name="Andersen G.L."/>
        </authorList>
    </citation>
    <scope>NUCLEOTIDE SEQUENCE [LARGE SCALE GENOMIC DNA]</scope>
    <source>
        <strain>Nepal516</strain>
    </source>
</reference>
<reference key="2">
    <citation type="submission" date="2009-04" db="EMBL/GenBank/DDBJ databases">
        <title>Yersinia pestis Nepal516A whole genome shotgun sequencing project.</title>
        <authorList>
            <person name="Plunkett G. III"/>
            <person name="Anderson B.D."/>
            <person name="Baumler D.J."/>
            <person name="Burland V."/>
            <person name="Cabot E.L."/>
            <person name="Glasner J.D."/>
            <person name="Mau B."/>
            <person name="Neeno-Eckwall E."/>
            <person name="Perna N.T."/>
            <person name="Munk A.C."/>
            <person name="Tapia R."/>
            <person name="Green L.D."/>
            <person name="Rogers Y.C."/>
            <person name="Detter J.C."/>
            <person name="Bruce D.C."/>
            <person name="Brettin T.S."/>
        </authorList>
    </citation>
    <scope>NUCLEOTIDE SEQUENCE [LARGE SCALE GENOMIC DNA]</scope>
    <source>
        <strain>Nepal516</strain>
    </source>
</reference>
<gene>
    <name evidence="1" type="primary">nqrE</name>
    <name type="ordered locus">YPN_0859</name>
    <name type="ORF">YP516_0928</name>
</gene>
<evidence type="ECO:0000255" key="1">
    <source>
        <dbReference type="HAMAP-Rule" id="MF_00429"/>
    </source>
</evidence>
<proteinExistence type="inferred from homology"/>
<name>NQRE_YERPN</name>